<accession>P0A5G6</accession>
<accession>A0A1R3Y1U0</accession>
<accession>Q50652</accession>
<accession>X2BLC2</accession>
<proteinExistence type="predicted"/>
<organism>
    <name type="scientific">Mycobacterium bovis (strain ATCC BAA-935 / AF2122/97)</name>
    <dbReference type="NCBI Taxonomy" id="233413"/>
    <lineage>
        <taxon>Bacteria</taxon>
        <taxon>Bacillati</taxon>
        <taxon>Actinomycetota</taxon>
        <taxon>Actinomycetes</taxon>
        <taxon>Mycobacteriales</taxon>
        <taxon>Mycobacteriaceae</taxon>
        <taxon>Mycobacterium</taxon>
        <taxon>Mycobacterium tuberculosis complex</taxon>
    </lineage>
</organism>
<sequence length="314" mass="34397">MSADSSLSLPLSGTHRYRVTHRTEYRYSDVVTSSYGRGFLTPRNSLRQRCVAHRLTIDPAPADRSTSRDGYGNISSYFHVTEPHRTLTITSDSIVDVSPPPPGLYTSGPALQPWEAARPAGLPGSLATEFTLDLNPPEITDAVREYAAPSFLPKRPLVEVLRDLASRIYTDFTYRSGSTTISTGVNEVLLAREGVCQDFARLAIACLRANGLAACYVSGYLATDPPPGKDRMIGIDATHAWASVWTPQQPGRFEWLGLDPTNDQLVDQRYIVVGRGRDYADVPPLRGIIYTNSENSVIDVSVDVVPFEGDALHA</sequence>
<evidence type="ECO:0000305" key="1"/>
<name>Y2599_MYCBO</name>
<reference key="1">
    <citation type="journal article" date="2003" name="Proc. Natl. Acad. Sci. U.S.A.">
        <title>The complete genome sequence of Mycobacterium bovis.</title>
        <authorList>
            <person name="Garnier T."/>
            <person name="Eiglmeier K."/>
            <person name="Camus J.-C."/>
            <person name="Medina N."/>
            <person name="Mansoor H."/>
            <person name="Pryor M."/>
            <person name="Duthoy S."/>
            <person name="Grondin S."/>
            <person name="Lacroix C."/>
            <person name="Monsempe C."/>
            <person name="Simon S."/>
            <person name="Harris B."/>
            <person name="Atkin R."/>
            <person name="Doggett J."/>
            <person name="Mayes R."/>
            <person name="Keating L."/>
            <person name="Wheeler P.R."/>
            <person name="Parkhill J."/>
            <person name="Barrell B.G."/>
            <person name="Cole S.T."/>
            <person name="Gordon S.V."/>
            <person name="Hewinson R.G."/>
        </authorList>
    </citation>
    <scope>NUCLEOTIDE SEQUENCE [LARGE SCALE GENOMIC DNA]</scope>
    <source>
        <strain>ATCC BAA-935 / AF2122/97</strain>
    </source>
</reference>
<reference key="2">
    <citation type="journal article" date="2017" name="Genome Announc.">
        <title>Updated reference genome sequence and annotation of Mycobacterium bovis AF2122/97.</title>
        <authorList>
            <person name="Malone K.M."/>
            <person name="Farrell D."/>
            <person name="Stuber T.P."/>
            <person name="Schubert O.T."/>
            <person name="Aebersold R."/>
            <person name="Robbe-Austerman S."/>
            <person name="Gordon S.V."/>
        </authorList>
    </citation>
    <scope>NUCLEOTIDE SEQUENCE [LARGE SCALE GENOMIC DNA]</scope>
    <scope>GENOME REANNOTATION</scope>
    <source>
        <strain>ATCC BAA-935 / AF2122/97</strain>
    </source>
</reference>
<dbReference type="EMBL" id="LT708304">
    <property type="protein sequence ID" value="SIU01217.1"/>
    <property type="molecule type" value="Genomic_DNA"/>
</dbReference>
<dbReference type="RefSeq" id="NP_856245.1">
    <property type="nucleotide sequence ID" value="NC_002945.3"/>
</dbReference>
<dbReference type="RefSeq" id="WP_003413334.1">
    <property type="nucleotide sequence ID" value="NC_002945.4"/>
</dbReference>
<dbReference type="SMR" id="P0A5G6"/>
<dbReference type="KEGG" id="mbo:BQ2027_MB2599C"/>
<dbReference type="PATRIC" id="fig|233413.5.peg.2858"/>
<dbReference type="Proteomes" id="UP000001419">
    <property type="component" value="Chromosome"/>
</dbReference>
<dbReference type="FunFam" id="3.10.620.30:FF:000007">
    <property type="entry name" value="Transglutaminase domain-containing protein"/>
    <property type="match status" value="1"/>
</dbReference>
<dbReference type="Gene3D" id="3.10.620.30">
    <property type="match status" value="1"/>
</dbReference>
<dbReference type="InterPro" id="IPR013589">
    <property type="entry name" value="Bac_transglu_N"/>
</dbReference>
<dbReference type="InterPro" id="IPR038765">
    <property type="entry name" value="Papain-like_cys_pep_sf"/>
</dbReference>
<dbReference type="InterPro" id="IPR002931">
    <property type="entry name" value="Transglutaminase-like"/>
</dbReference>
<dbReference type="PANTHER" id="PTHR33490:SF7">
    <property type="entry name" value="BLR2979 PROTEIN"/>
    <property type="match status" value="1"/>
</dbReference>
<dbReference type="PANTHER" id="PTHR33490">
    <property type="entry name" value="BLR5614 PROTEIN-RELATED"/>
    <property type="match status" value="1"/>
</dbReference>
<dbReference type="Pfam" id="PF08379">
    <property type="entry name" value="Bact_transglu_N"/>
    <property type="match status" value="1"/>
</dbReference>
<dbReference type="Pfam" id="PF01841">
    <property type="entry name" value="Transglut_core"/>
    <property type="match status" value="1"/>
</dbReference>
<dbReference type="SMART" id="SM00460">
    <property type="entry name" value="TGc"/>
    <property type="match status" value="1"/>
</dbReference>
<dbReference type="SUPFAM" id="SSF54001">
    <property type="entry name" value="Cysteine proteinases"/>
    <property type="match status" value="1"/>
</dbReference>
<protein>
    <recommendedName>
        <fullName>Uncharacterized protein Mb2599c</fullName>
    </recommendedName>
</protein>
<keyword id="KW-1185">Reference proteome</keyword>
<gene>
    <name type="ordered locus">BQ2027_MB2599C</name>
</gene>
<feature type="chain" id="PRO_0000104048" description="Uncharacterized protein Mb2599c">
    <location>
        <begin position="1"/>
        <end position="314"/>
    </location>
</feature>
<comment type="similarity">
    <text evidence="1">To M.leprae ML0607.</text>
</comment>